<sequence>MSHGGGGHAAELFPENQVLVIGAVLSLIGMYIAHFVPSLAMLLGGLLAAGACVAGANTTRRVAAYGLGTGVPSIGMVSLGMGTISALAGVLIPSVLAGSVALPFDLVLATPIIAAVVAIIVGFIVGKLTQNPVGMKVPIIVSSMTKLSLMGALAILGFCTAFAGGFSADLIINGAINNGIIALAFIAAGMSILHPFNACIGPNESHKRTITLATACGLMAWLVFSIAKLDIVSILVAAVFWIYTYGSFVSMSLADACEVKYVPELPKKE</sequence>
<gene>
    <name evidence="1" type="primary">mtrC</name>
    <name type="ordered locus">Mevan_0875</name>
</gene>
<name>MTRC_METVS</name>
<protein>
    <recommendedName>
        <fullName evidence="1">Tetrahydromethanopterin S-methyltransferase subunit C</fullName>
        <ecNumber evidence="1">7.2.1.4</ecNumber>
    </recommendedName>
    <alternativeName>
        <fullName evidence="1">N5-methyltetrahydromethanopterin--coenzyme M methyltransferase subunit C</fullName>
    </alternativeName>
</protein>
<proteinExistence type="inferred from homology"/>
<dbReference type="EC" id="7.2.1.4" evidence="1"/>
<dbReference type="EMBL" id="CP000742">
    <property type="protein sequence ID" value="ABR54780.1"/>
    <property type="molecule type" value="Genomic_DNA"/>
</dbReference>
<dbReference type="RefSeq" id="WP_011972681.1">
    <property type="nucleotide sequence ID" value="NC_009634.1"/>
</dbReference>
<dbReference type="SMR" id="A6UQK8"/>
<dbReference type="STRING" id="406327.Mevan_0875"/>
<dbReference type="GeneID" id="5326189"/>
<dbReference type="KEGG" id="mvn:Mevan_0875"/>
<dbReference type="eggNOG" id="arCOG04868">
    <property type="taxonomic scope" value="Archaea"/>
</dbReference>
<dbReference type="HOGENOM" id="CLU_092286_0_0_2"/>
<dbReference type="OrthoDB" id="60591at2157"/>
<dbReference type="UniPathway" id="UPA00640">
    <property type="reaction ID" value="UER00698"/>
</dbReference>
<dbReference type="Proteomes" id="UP000001107">
    <property type="component" value="Chromosome"/>
</dbReference>
<dbReference type="GO" id="GO:0005886">
    <property type="term" value="C:plasma membrane"/>
    <property type="evidence" value="ECO:0007669"/>
    <property type="project" value="UniProtKB-SubCell"/>
</dbReference>
<dbReference type="GO" id="GO:0030269">
    <property type="term" value="F:tetrahydromethanopterin S-methyltransferase activity"/>
    <property type="evidence" value="ECO:0007669"/>
    <property type="project" value="UniProtKB-UniRule"/>
</dbReference>
<dbReference type="GO" id="GO:0019386">
    <property type="term" value="P:methanogenesis, from carbon dioxide"/>
    <property type="evidence" value="ECO:0007669"/>
    <property type="project" value="UniProtKB-UniRule"/>
</dbReference>
<dbReference type="GO" id="GO:0032259">
    <property type="term" value="P:methylation"/>
    <property type="evidence" value="ECO:0007669"/>
    <property type="project" value="UniProtKB-KW"/>
</dbReference>
<dbReference type="GO" id="GO:0006730">
    <property type="term" value="P:one-carbon metabolic process"/>
    <property type="evidence" value="ECO:0007669"/>
    <property type="project" value="UniProtKB-UniRule"/>
</dbReference>
<dbReference type="HAMAP" id="MF_01096">
    <property type="entry name" value="MtrC"/>
    <property type="match status" value="1"/>
</dbReference>
<dbReference type="InterPro" id="IPR005865">
    <property type="entry name" value="THM_MeTrfase_su_C"/>
</dbReference>
<dbReference type="NCBIfam" id="TIGR01148">
    <property type="entry name" value="mtrC"/>
    <property type="match status" value="1"/>
</dbReference>
<dbReference type="Pfam" id="PF04211">
    <property type="entry name" value="MtrC"/>
    <property type="match status" value="1"/>
</dbReference>
<dbReference type="PIRSF" id="PIRSF006530">
    <property type="entry name" value="MtrC"/>
    <property type="match status" value="1"/>
</dbReference>
<comment type="function">
    <text evidence="1">Part of a complex that catalyzes the formation of methyl-coenzyme M and tetrahydromethanopterin from coenzyme M and methyl-tetrahydromethanopterin. This is an energy-conserving, sodium-ion translocating step.</text>
</comment>
<comment type="catalytic activity">
    <reaction evidence="1">
        <text>5-methyl-5,6,7,8-tetrahydromethanopterin + coenzyme M + 2 Na(+)(in) = 5,6,7,8-tetrahydromethanopterin + methyl-coenzyme M + 2 Na(+)(out)</text>
        <dbReference type="Rhea" id="RHEA:53492"/>
        <dbReference type="ChEBI" id="CHEBI:29101"/>
        <dbReference type="ChEBI" id="CHEBI:58103"/>
        <dbReference type="ChEBI" id="CHEBI:58116"/>
        <dbReference type="ChEBI" id="CHEBI:58286"/>
        <dbReference type="ChEBI" id="CHEBI:58319"/>
        <dbReference type="EC" id="7.2.1.4"/>
    </reaction>
</comment>
<comment type="pathway">
    <text evidence="1">One-carbon metabolism; methanogenesis from CO(2); methyl-coenzyme M from 5,10-methylene-5,6,7,8-tetrahydromethanopterin: step 2/2.</text>
</comment>
<comment type="subunit">
    <text evidence="1">The complex is composed of 8 subunits; MtrA, MtrB, MtrC, MtrD, MtrE, MtrF, MtrG and MtrH.</text>
</comment>
<comment type="subcellular location">
    <subcellularLocation>
        <location evidence="1">Cell membrane</location>
        <topology evidence="1">Multi-pass membrane protein</topology>
    </subcellularLocation>
</comment>
<comment type="similarity">
    <text evidence="1">Belongs to the MtrC family.</text>
</comment>
<reference key="1">
    <citation type="submission" date="2007-06" db="EMBL/GenBank/DDBJ databases">
        <title>Complete sequence of Methanococcus vannielii SB.</title>
        <authorList>
            <consortium name="US DOE Joint Genome Institute"/>
            <person name="Copeland A."/>
            <person name="Lucas S."/>
            <person name="Lapidus A."/>
            <person name="Barry K."/>
            <person name="Glavina del Rio T."/>
            <person name="Dalin E."/>
            <person name="Tice H."/>
            <person name="Pitluck S."/>
            <person name="Chain P."/>
            <person name="Malfatti S."/>
            <person name="Shin M."/>
            <person name="Vergez L."/>
            <person name="Schmutz J."/>
            <person name="Larimer F."/>
            <person name="Land M."/>
            <person name="Hauser L."/>
            <person name="Kyrpides N."/>
            <person name="Anderson I."/>
            <person name="Sieprawska-Lupa M."/>
            <person name="Whitman W.B."/>
            <person name="Richardson P."/>
        </authorList>
    </citation>
    <scope>NUCLEOTIDE SEQUENCE [LARGE SCALE GENOMIC DNA]</scope>
    <source>
        <strain>ATCC 35089 / DSM 1224 / JCM 13029 / OCM 148 / SB</strain>
    </source>
</reference>
<keyword id="KW-1003">Cell membrane</keyword>
<keyword id="KW-0472">Membrane</keyword>
<keyword id="KW-0484">Methanogenesis</keyword>
<keyword id="KW-0489">Methyltransferase</keyword>
<keyword id="KW-0554">One-carbon metabolism</keyword>
<keyword id="KW-0808">Transferase</keyword>
<keyword id="KW-1278">Translocase</keyword>
<keyword id="KW-0812">Transmembrane</keyword>
<keyword id="KW-1133">Transmembrane helix</keyword>
<accession>A6UQK8</accession>
<feature type="chain" id="PRO_1000064941" description="Tetrahydromethanopterin S-methyltransferase subunit C">
    <location>
        <begin position="1"/>
        <end position="269"/>
    </location>
</feature>
<feature type="transmembrane region" description="Helical" evidence="1">
    <location>
        <begin position="18"/>
        <end position="38"/>
    </location>
</feature>
<feature type="transmembrane region" description="Helical" evidence="1">
    <location>
        <begin position="39"/>
        <end position="59"/>
    </location>
</feature>
<feature type="transmembrane region" description="Helical" evidence="1">
    <location>
        <begin position="62"/>
        <end position="82"/>
    </location>
</feature>
<feature type="transmembrane region" description="Helical" evidence="1">
    <location>
        <begin position="84"/>
        <end position="104"/>
    </location>
</feature>
<feature type="transmembrane region" description="Helical" evidence="1">
    <location>
        <begin position="106"/>
        <end position="126"/>
    </location>
</feature>
<feature type="transmembrane region" description="Helical" evidence="1">
    <location>
        <begin position="152"/>
        <end position="172"/>
    </location>
</feature>
<feature type="transmembrane region" description="Helical" evidence="1">
    <location>
        <begin position="180"/>
        <end position="200"/>
    </location>
</feature>
<feature type="transmembrane region" description="Helical" evidence="1">
    <location>
        <begin position="222"/>
        <end position="242"/>
    </location>
</feature>
<evidence type="ECO:0000255" key="1">
    <source>
        <dbReference type="HAMAP-Rule" id="MF_01096"/>
    </source>
</evidence>
<organism>
    <name type="scientific">Methanococcus vannielii (strain ATCC 35089 / DSM 1224 / JCM 13029 / OCM 148 / SB)</name>
    <dbReference type="NCBI Taxonomy" id="406327"/>
    <lineage>
        <taxon>Archaea</taxon>
        <taxon>Methanobacteriati</taxon>
        <taxon>Methanobacteriota</taxon>
        <taxon>Methanomada group</taxon>
        <taxon>Methanococci</taxon>
        <taxon>Methanococcales</taxon>
        <taxon>Methanococcaceae</taxon>
        <taxon>Methanococcus</taxon>
    </lineage>
</organism>